<feature type="chain" id="PRO_1000184048" description="Large ribosomal subunit protein bL17">
    <location>
        <begin position="1"/>
        <end position="128"/>
    </location>
</feature>
<protein>
    <recommendedName>
        <fullName evidence="1">Large ribosomal subunit protein bL17</fullName>
    </recommendedName>
    <alternativeName>
        <fullName evidence="2">50S ribosomal protein L17</fullName>
    </alternativeName>
</protein>
<accession>C1CC33</accession>
<dbReference type="EMBL" id="CP000919">
    <property type="protein sequence ID" value="ACO18938.1"/>
    <property type="molecule type" value="Genomic_DNA"/>
</dbReference>
<dbReference type="RefSeq" id="WP_000331493.1">
    <property type="nucleotide sequence ID" value="NC_012466.1"/>
</dbReference>
<dbReference type="SMR" id="C1CC33"/>
<dbReference type="GeneID" id="93738984"/>
<dbReference type="KEGG" id="sjj:SPJ_0246"/>
<dbReference type="HOGENOM" id="CLU_074407_2_2_9"/>
<dbReference type="Proteomes" id="UP000002206">
    <property type="component" value="Chromosome"/>
</dbReference>
<dbReference type="GO" id="GO:0022625">
    <property type="term" value="C:cytosolic large ribosomal subunit"/>
    <property type="evidence" value="ECO:0007669"/>
    <property type="project" value="TreeGrafter"/>
</dbReference>
<dbReference type="GO" id="GO:0003735">
    <property type="term" value="F:structural constituent of ribosome"/>
    <property type="evidence" value="ECO:0007669"/>
    <property type="project" value="InterPro"/>
</dbReference>
<dbReference type="GO" id="GO:0006412">
    <property type="term" value="P:translation"/>
    <property type="evidence" value="ECO:0007669"/>
    <property type="project" value="UniProtKB-UniRule"/>
</dbReference>
<dbReference type="FunFam" id="3.90.1030.10:FF:000002">
    <property type="entry name" value="50S ribosomal protein L17"/>
    <property type="match status" value="1"/>
</dbReference>
<dbReference type="Gene3D" id="3.90.1030.10">
    <property type="entry name" value="Ribosomal protein L17"/>
    <property type="match status" value="1"/>
</dbReference>
<dbReference type="HAMAP" id="MF_01368">
    <property type="entry name" value="Ribosomal_bL17"/>
    <property type="match status" value="1"/>
</dbReference>
<dbReference type="InterPro" id="IPR000456">
    <property type="entry name" value="Ribosomal_bL17"/>
</dbReference>
<dbReference type="InterPro" id="IPR047859">
    <property type="entry name" value="Ribosomal_bL17_CS"/>
</dbReference>
<dbReference type="InterPro" id="IPR036373">
    <property type="entry name" value="Ribosomal_bL17_sf"/>
</dbReference>
<dbReference type="NCBIfam" id="TIGR00059">
    <property type="entry name" value="L17"/>
    <property type="match status" value="1"/>
</dbReference>
<dbReference type="PANTHER" id="PTHR14413:SF16">
    <property type="entry name" value="LARGE RIBOSOMAL SUBUNIT PROTEIN BL17M"/>
    <property type="match status" value="1"/>
</dbReference>
<dbReference type="PANTHER" id="PTHR14413">
    <property type="entry name" value="RIBOSOMAL PROTEIN L17"/>
    <property type="match status" value="1"/>
</dbReference>
<dbReference type="Pfam" id="PF01196">
    <property type="entry name" value="Ribosomal_L17"/>
    <property type="match status" value="1"/>
</dbReference>
<dbReference type="SUPFAM" id="SSF64263">
    <property type="entry name" value="Prokaryotic ribosomal protein L17"/>
    <property type="match status" value="1"/>
</dbReference>
<dbReference type="PROSITE" id="PS01167">
    <property type="entry name" value="RIBOSOMAL_L17"/>
    <property type="match status" value="1"/>
</dbReference>
<evidence type="ECO:0000255" key="1">
    <source>
        <dbReference type="HAMAP-Rule" id="MF_01368"/>
    </source>
</evidence>
<evidence type="ECO:0000305" key="2"/>
<sequence length="128" mass="14506">MAYRKLGRTSSQRKAMLRDLTTDLLINESIVTTEARAKEIRKTVEKMITLGKRGDLHARRQAAAFVRNEIASENYDEATDKYTSTTALQKLFSEIAPRYAERNGGYTRILKTEPRRGDAAPMAIIELV</sequence>
<proteinExistence type="inferred from homology"/>
<name>RL17_STRZJ</name>
<organism>
    <name type="scientific">Streptococcus pneumoniae (strain JJA)</name>
    <dbReference type="NCBI Taxonomy" id="488222"/>
    <lineage>
        <taxon>Bacteria</taxon>
        <taxon>Bacillati</taxon>
        <taxon>Bacillota</taxon>
        <taxon>Bacilli</taxon>
        <taxon>Lactobacillales</taxon>
        <taxon>Streptococcaceae</taxon>
        <taxon>Streptococcus</taxon>
    </lineage>
</organism>
<comment type="subunit">
    <text evidence="1">Part of the 50S ribosomal subunit. Contacts protein L32.</text>
</comment>
<comment type="similarity">
    <text evidence="1">Belongs to the bacterial ribosomal protein bL17 family.</text>
</comment>
<reference key="1">
    <citation type="journal article" date="2010" name="Genome Biol.">
        <title>Structure and dynamics of the pan-genome of Streptococcus pneumoniae and closely related species.</title>
        <authorList>
            <person name="Donati C."/>
            <person name="Hiller N.L."/>
            <person name="Tettelin H."/>
            <person name="Muzzi A."/>
            <person name="Croucher N.J."/>
            <person name="Angiuoli S.V."/>
            <person name="Oggioni M."/>
            <person name="Dunning Hotopp J.C."/>
            <person name="Hu F.Z."/>
            <person name="Riley D.R."/>
            <person name="Covacci A."/>
            <person name="Mitchell T.J."/>
            <person name="Bentley S.D."/>
            <person name="Kilian M."/>
            <person name="Ehrlich G.D."/>
            <person name="Rappuoli R."/>
            <person name="Moxon E.R."/>
            <person name="Masignani V."/>
        </authorList>
    </citation>
    <scope>NUCLEOTIDE SEQUENCE [LARGE SCALE GENOMIC DNA]</scope>
    <source>
        <strain>JJA</strain>
    </source>
</reference>
<keyword id="KW-0687">Ribonucleoprotein</keyword>
<keyword id="KW-0689">Ribosomal protein</keyword>
<gene>
    <name evidence="1" type="primary">rplQ</name>
    <name type="ordered locus">SPJ_0246</name>
</gene>